<organism>
    <name type="scientific">Neurospora crassa (strain ATCC 24698 / 74-OR23-1A / CBS 708.71 / DSM 1257 / FGSC 987)</name>
    <dbReference type="NCBI Taxonomy" id="367110"/>
    <lineage>
        <taxon>Eukaryota</taxon>
        <taxon>Fungi</taxon>
        <taxon>Dikarya</taxon>
        <taxon>Ascomycota</taxon>
        <taxon>Pezizomycotina</taxon>
        <taxon>Sordariomycetes</taxon>
        <taxon>Sordariomycetidae</taxon>
        <taxon>Sordariales</taxon>
        <taxon>Sordariaceae</taxon>
        <taxon>Neurospora</taxon>
    </lineage>
</organism>
<dbReference type="EMBL" id="CM002242">
    <property type="protein sequence ID" value="EAA29351.1"/>
    <property type="molecule type" value="Genomic_DNA"/>
</dbReference>
<dbReference type="RefSeq" id="XP_958587.1">
    <property type="nucleotide sequence ID" value="XM_953494.2"/>
</dbReference>
<dbReference type="SMR" id="Q7S1Y0"/>
<dbReference type="FunCoup" id="Q7S1Y0">
    <property type="interactions" value="1138"/>
</dbReference>
<dbReference type="STRING" id="367110.Q7S1Y0"/>
<dbReference type="PaxDb" id="5141-EFNCRP00000009229"/>
<dbReference type="EnsemblFungi" id="EAA29351">
    <property type="protein sequence ID" value="EAA29351"/>
    <property type="gene ID" value="NCU09435"/>
</dbReference>
<dbReference type="GeneID" id="3874734"/>
<dbReference type="KEGG" id="ncr:NCU09435"/>
<dbReference type="VEuPathDB" id="FungiDB:NCU09435"/>
<dbReference type="HOGENOM" id="CLU_007630_1_1_1"/>
<dbReference type="InParanoid" id="Q7S1Y0"/>
<dbReference type="OMA" id="VQLWSVY"/>
<dbReference type="OrthoDB" id="26282at2759"/>
<dbReference type="Proteomes" id="UP000001805">
    <property type="component" value="Chromosome 7, Linkage Group VII"/>
</dbReference>
<dbReference type="GO" id="GO:0005737">
    <property type="term" value="C:cytoplasm"/>
    <property type="evidence" value="ECO:0007669"/>
    <property type="project" value="UniProtKB-SubCell"/>
</dbReference>
<dbReference type="GO" id="GO:0005634">
    <property type="term" value="C:nucleus"/>
    <property type="evidence" value="ECO:0000318"/>
    <property type="project" value="GO_Central"/>
</dbReference>
<dbReference type="GO" id="GO:0003729">
    <property type="term" value="F:mRNA binding"/>
    <property type="evidence" value="ECO:0000318"/>
    <property type="project" value="GO_Central"/>
</dbReference>
<dbReference type="GO" id="GO:0031124">
    <property type="term" value="P:mRNA 3'-end processing"/>
    <property type="evidence" value="ECO:0007669"/>
    <property type="project" value="InterPro"/>
</dbReference>
<dbReference type="GO" id="GO:0031123">
    <property type="term" value="P:RNA 3'-end processing"/>
    <property type="evidence" value="ECO:0000318"/>
    <property type="project" value="GO_Central"/>
</dbReference>
<dbReference type="FunFam" id="1.25.40.1040:FF:000006">
    <property type="entry name" value="CFIA complex component Rna14, putative"/>
    <property type="match status" value="1"/>
</dbReference>
<dbReference type="Gene3D" id="1.25.40.1040">
    <property type="match status" value="1"/>
</dbReference>
<dbReference type="InterPro" id="IPR003107">
    <property type="entry name" value="HAT"/>
</dbReference>
<dbReference type="InterPro" id="IPR045243">
    <property type="entry name" value="Rna14-like"/>
</dbReference>
<dbReference type="InterPro" id="IPR008847">
    <property type="entry name" value="Suf"/>
</dbReference>
<dbReference type="InterPro" id="IPR011990">
    <property type="entry name" value="TPR-like_helical_dom_sf"/>
</dbReference>
<dbReference type="PANTHER" id="PTHR19980:SF0">
    <property type="entry name" value="CLEAVAGE STIMULATION FACTOR SUBUNIT 3"/>
    <property type="match status" value="1"/>
</dbReference>
<dbReference type="PANTHER" id="PTHR19980">
    <property type="entry name" value="RNA CLEAVAGE STIMULATION FACTOR"/>
    <property type="match status" value="1"/>
</dbReference>
<dbReference type="Pfam" id="PF05843">
    <property type="entry name" value="Suf"/>
    <property type="match status" value="1"/>
</dbReference>
<dbReference type="SMART" id="SM00386">
    <property type="entry name" value="HAT"/>
    <property type="match status" value="5"/>
</dbReference>
<dbReference type="SUPFAM" id="SSF48452">
    <property type="entry name" value="TPR-like"/>
    <property type="match status" value="2"/>
</dbReference>
<dbReference type="PROSITE" id="PS50293">
    <property type="entry name" value="TPR_REGION"/>
    <property type="match status" value="1"/>
</dbReference>
<feature type="chain" id="PRO_0000238527" description="mRNA 3'-end-processing protein rna-14">
    <location>
        <begin position="1"/>
        <end position="1167"/>
    </location>
</feature>
<feature type="repeat" description="HAT 1">
    <location>
        <begin position="277"/>
        <end position="309"/>
    </location>
</feature>
<feature type="repeat" description="HAT 2">
    <location>
        <begin position="311"/>
        <end position="342"/>
    </location>
</feature>
<feature type="repeat" description="HAT 3">
    <location>
        <begin position="352"/>
        <end position="387"/>
    </location>
</feature>
<feature type="repeat" description="HAT 4">
    <location>
        <begin position="401"/>
        <end position="434"/>
    </location>
</feature>
<feature type="repeat" description="HAT 5">
    <location>
        <begin position="471"/>
        <end position="504"/>
    </location>
</feature>
<feature type="repeat" description="HAT 6">
    <location>
        <begin position="518"/>
        <end position="550"/>
    </location>
</feature>
<feature type="region of interest" description="Disordered" evidence="2">
    <location>
        <begin position="1"/>
        <end position="245"/>
    </location>
</feature>
<feature type="region of interest" description="Disordered" evidence="2">
    <location>
        <begin position="882"/>
        <end position="980"/>
    </location>
</feature>
<feature type="region of interest" description="Disordered" evidence="2">
    <location>
        <begin position="1075"/>
        <end position="1167"/>
    </location>
</feature>
<feature type="compositionally biased region" description="Acidic residues" evidence="2">
    <location>
        <begin position="16"/>
        <end position="26"/>
    </location>
</feature>
<feature type="compositionally biased region" description="Acidic residues" evidence="2">
    <location>
        <begin position="70"/>
        <end position="79"/>
    </location>
</feature>
<feature type="compositionally biased region" description="Low complexity" evidence="2">
    <location>
        <begin position="102"/>
        <end position="111"/>
    </location>
</feature>
<feature type="compositionally biased region" description="Acidic residues" evidence="2">
    <location>
        <begin position="124"/>
        <end position="137"/>
    </location>
</feature>
<feature type="compositionally biased region" description="Low complexity" evidence="2">
    <location>
        <begin position="138"/>
        <end position="150"/>
    </location>
</feature>
<feature type="compositionally biased region" description="Low complexity" evidence="2">
    <location>
        <begin position="159"/>
        <end position="191"/>
    </location>
</feature>
<feature type="compositionally biased region" description="Polar residues" evidence="2">
    <location>
        <begin position="192"/>
        <end position="218"/>
    </location>
</feature>
<feature type="compositionally biased region" description="Low complexity" evidence="2">
    <location>
        <begin position="219"/>
        <end position="245"/>
    </location>
</feature>
<feature type="compositionally biased region" description="Polar residues" evidence="2">
    <location>
        <begin position="882"/>
        <end position="893"/>
    </location>
</feature>
<feature type="compositionally biased region" description="Low complexity" evidence="2">
    <location>
        <begin position="908"/>
        <end position="922"/>
    </location>
</feature>
<feature type="compositionally biased region" description="Basic and acidic residues" evidence="2">
    <location>
        <begin position="924"/>
        <end position="946"/>
    </location>
</feature>
<feature type="compositionally biased region" description="Gly residues" evidence="2">
    <location>
        <begin position="969"/>
        <end position="979"/>
    </location>
</feature>
<feature type="compositionally biased region" description="Low complexity" evidence="2">
    <location>
        <begin position="1079"/>
        <end position="1090"/>
    </location>
</feature>
<feature type="compositionally biased region" description="Pro residues" evidence="2">
    <location>
        <begin position="1121"/>
        <end position="1134"/>
    </location>
</feature>
<feature type="compositionally biased region" description="Low complexity" evidence="2">
    <location>
        <begin position="1135"/>
        <end position="1151"/>
    </location>
</feature>
<reference key="1">
    <citation type="journal article" date="2003" name="Nature">
        <title>The genome sequence of the filamentous fungus Neurospora crassa.</title>
        <authorList>
            <person name="Galagan J.E."/>
            <person name="Calvo S.E."/>
            <person name="Borkovich K.A."/>
            <person name="Selker E.U."/>
            <person name="Read N.D."/>
            <person name="Jaffe D.B."/>
            <person name="FitzHugh W."/>
            <person name="Ma L.-J."/>
            <person name="Smirnov S."/>
            <person name="Purcell S."/>
            <person name="Rehman B."/>
            <person name="Elkins T."/>
            <person name="Engels R."/>
            <person name="Wang S."/>
            <person name="Nielsen C.B."/>
            <person name="Butler J."/>
            <person name="Endrizzi M."/>
            <person name="Qui D."/>
            <person name="Ianakiev P."/>
            <person name="Bell-Pedersen D."/>
            <person name="Nelson M.A."/>
            <person name="Werner-Washburne M."/>
            <person name="Selitrennikoff C.P."/>
            <person name="Kinsey J.A."/>
            <person name="Braun E.L."/>
            <person name="Zelter A."/>
            <person name="Schulte U."/>
            <person name="Kothe G.O."/>
            <person name="Jedd G."/>
            <person name="Mewes H.-W."/>
            <person name="Staben C."/>
            <person name="Marcotte E."/>
            <person name="Greenberg D."/>
            <person name="Roy A."/>
            <person name="Foley K."/>
            <person name="Naylor J."/>
            <person name="Stange-Thomann N."/>
            <person name="Barrett R."/>
            <person name="Gnerre S."/>
            <person name="Kamal M."/>
            <person name="Kamvysselis M."/>
            <person name="Mauceli E.W."/>
            <person name="Bielke C."/>
            <person name="Rudd S."/>
            <person name="Frishman D."/>
            <person name="Krystofova S."/>
            <person name="Rasmussen C."/>
            <person name="Metzenberg R.L."/>
            <person name="Perkins D.D."/>
            <person name="Kroken S."/>
            <person name="Cogoni C."/>
            <person name="Macino G."/>
            <person name="Catcheside D.E.A."/>
            <person name="Li W."/>
            <person name="Pratt R.J."/>
            <person name="Osmani S.A."/>
            <person name="DeSouza C.P.C."/>
            <person name="Glass N.L."/>
            <person name="Orbach M.J."/>
            <person name="Berglund J.A."/>
            <person name="Voelker R."/>
            <person name="Yarden O."/>
            <person name="Plamann M."/>
            <person name="Seiler S."/>
            <person name="Dunlap J.C."/>
            <person name="Radford A."/>
            <person name="Aramayo R."/>
            <person name="Natvig D.O."/>
            <person name="Alex L.A."/>
            <person name="Mannhaupt G."/>
            <person name="Ebbole D.J."/>
            <person name="Freitag M."/>
            <person name="Paulsen I."/>
            <person name="Sachs M.S."/>
            <person name="Lander E.S."/>
            <person name="Nusbaum C."/>
            <person name="Birren B.W."/>
        </authorList>
    </citation>
    <scope>NUCLEOTIDE SEQUENCE [LARGE SCALE GENOMIC DNA]</scope>
    <source>
        <strain>ATCC 24698 / 74-OR23-1A / CBS 708.71 / DSM 1257 / FGSC 987</strain>
    </source>
</reference>
<name>RNA14_NEUCR</name>
<evidence type="ECO:0000250" key="1"/>
<evidence type="ECO:0000256" key="2">
    <source>
        <dbReference type="SAM" id="MobiDB-lite"/>
    </source>
</evidence>
<sequence length="1167" mass="128491">MSDDYDPTNINAASWEEQEDYGEADGSEQYGEAEGSEQQDIQHSSEHQEAEYSVESNPNDLGDHPSQDGNTDDVGDDYDPASVVTSSVPAPPSAPAQEDSKTAPQPAAPVAKKPRTAGGFLVGDSDDEDEDGDDDGEPQQQQQQQQQQQPHQVVHKETGSGASSSGGSAPAPASASATAAPQSHSPAPQTATLTVQDNAGATTFNAPPVPQQVSHQSGATTAAVPTTPSSAAPAVDPTPVTQPAPDRVAIYEDQIRDDPRGAMNAWLELMKEKRARNDIDGARQVYERFLAIFPQAADIWVEYLDLELSLNNFPQAEGIFAKCLMTTPNVNLWTRYLDYIRRRNDLNDSTGQARQTVSQAYEFVIDNIGLDKDSGKIWAEYIQFIKFGPGTVGGSQWQDQQKMDQLRKAYQRAICVPISNVNTLWKEYDQFEMGLNKLTGRKYLSEKSPSYMSAKSANTALEHITRGLNRTNLPRLPPAPGFDGDQEFMEQVEIWKKWIAWEKSDPLDLKDDKDQPGLYQKRILYVYNQALMALRFWPEMWVDAAQWCFDNNITTVENKVTKDGNANGVEFLIRGIEANPESVLLAFKHADHIESTYPIEENDEAKIQRGEAVKAPYNKVLDTLYAMIKSLKEKEAAQIAKLQEMTAAQESKAGSDNEDGDGAADNIKKAPIEAIQKGYAAQTQLLSRMISFVWIALIRAMRRVQGKGGLNVPLGGMRKAFHDARARGRLTSDVYAAVAQLEWTIYKDPAGGKIFDRGAKLFPEDENFTLENIKYLHSRDDHTNARVLFETVVNRLTQKPELVHKAKPLYQYFHKYESQFGELAQVTKLEKRMAELFPEDPKLAAFTARYASDKFDPITARIIVSPTTQLRPKNMIMPSIEQQQPQLPMSQRDTPAAGFSPRPQGLKSPSAGPGAPFAPYAAKRPLDDRDYDDHPRKIARSEHDPFVRGASPLKGAAGRRLDQQRRMGGAAGAYSGSGAGSQVAPIARDITFLLSQIPRVEFYDSHRLNPSRMVSLLQNVKVPEYLDWKRERERMQQMQQMQGDGYGGYGGGGGGGGGGGYQGGGHARNISQDYAYRESPGPLGGRPLSPFTGGPGSRLASATAAYRQAPVGRPESSGSYEPPPAAQYGVPPPAQYDGGWAQQQQQQQYGQPPAPQGYRYGNPPPPY</sequence>
<protein>
    <recommendedName>
        <fullName>mRNA 3'-end-processing protein rna-14</fullName>
    </recommendedName>
</protein>
<accession>Q7S1Y0</accession>
<gene>
    <name type="primary">rna-14</name>
    <name type="ORF">NCU09435</name>
</gene>
<proteinExistence type="inferred from homology"/>
<keyword id="KW-0963">Cytoplasm</keyword>
<keyword id="KW-0507">mRNA processing</keyword>
<keyword id="KW-0539">Nucleus</keyword>
<keyword id="KW-1185">Reference proteome</keyword>
<keyword id="KW-0677">Repeat</keyword>
<comment type="function">
    <text evidence="1">Component of the cleavage factor IA (CFIA) complex, which is involved in the endonucleolytic cleavage during polyadenylation-dependent pre-mRNA 3'-end formation.</text>
</comment>
<comment type="subcellular location">
    <subcellularLocation>
        <location evidence="1">Nucleus</location>
    </subcellularLocation>
    <subcellularLocation>
        <location evidence="1">Cytoplasm</location>
    </subcellularLocation>
    <text evidence="1">Nucleus and/or cytoplasm.</text>
</comment>